<gene>
    <name evidence="4" type="primary">arcB</name>
    <name evidence="4" type="ordered locus">BCE33L0803</name>
</gene>
<protein>
    <recommendedName>
        <fullName>Delta(1)-pyrroline-2-carboxylate reductase</fullName>
        <shortName>Pyr2C reductase</shortName>
        <ecNumber evidence="1">1.5.1.49</ecNumber>
    </recommendedName>
    <alternativeName>
        <fullName evidence="2">Proline ketimine reductase</fullName>
    </alternativeName>
</protein>
<evidence type="ECO:0000269" key="1">
    <source>
    </source>
</evidence>
<evidence type="ECO:0000303" key="2">
    <source>
    </source>
</evidence>
<evidence type="ECO:0000305" key="3"/>
<evidence type="ECO:0000312" key="4">
    <source>
        <dbReference type="EMBL" id="AAU19440.1"/>
    </source>
</evidence>
<feature type="chain" id="PRO_0000432301" description="Delta(1)-pyrroline-2-carboxylate reductase">
    <location>
        <begin position="1"/>
        <end position="325"/>
    </location>
</feature>
<keyword id="KW-0520">NAD</keyword>
<keyword id="KW-0521">NADP</keyword>
<keyword id="KW-0560">Oxidoreductase</keyword>
<dbReference type="EC" id="1.5.1.49" evidence="1"/>
<dbReference type="EMBL" id="CP000001">
    <property type="protein sequence ID" value="AAU19440.1"/>
    <property type="molecule type" value="Genomic_DNA"/>
</dbReference>
<dbReference type="RefSeq" id="WP_000960289.1">
    <property type="nucleotide sequence ID" value="NC_006274.1"/>
</dbReference>
<dbReference type="SMR" id="Q63FA5"/>
<dbReference type="KEGG" id="bcz:BCE33L0803"/>
<dbReference type="PATRIC" id="fig|288681.22.peg.4775"/>
<dbReference type="SABIO-RK" id="Q63FA5"/>
<dbReference type="Proteomes" id="UP000002612">
    <property type="component" value="Chromosome"/>
</dbReference>
<dbReference type="GO" id="GO:0005737">
    <property type="term" value="C:cytoplasm"/>
    <property type="evidence" value="ECO:0007669"/>
    <property type="project" value="TreeGrafter"/>
</dbReference>
<dbReference type="GO" id="GO:0016491">
    <property type="term" value="F:oxidoreductase activity"/>
    <property type="evidence" value="ECO:0007669"/>
    <property type="project" value="UniProtKB-KW"/>
</dbReference>
<dbReference type="FunFam" id="3.30.1780.10:FF:000002">
    <property type="entry name" value="Ornithine cyclodeaminase"/>
    <property type="match status" value="1"/>
</dbReference>
<dbReference type="FunFam" id="3.40.50.720:FF:000311">
    <property type="entry name" value="Ornithine cyclodeaminase"/>
    <property type="match status" value="1"/>
</dbReference>
<dbReference type="Gene3D" id="3.40.50.720">
    <property type="entry name" value="NAD(P)-binding Rossmann-like Domain"/>
    <property type="match status" value="1"/>
</dbReference>
<dbReference type="Gene3D" id="3.30.1780.10">
    <property type="entry name" value="ornithine cyclodeaminase, domain 1"/>
    <property type="match status" value="1"/>
</dbReference>
<dbReference type="InterPro" id="IPR036291">
    <property type="entry name" value="NAD(P)-bd_dom_sf"/>
</dbReference>
<dbReference type="InterPro" id="IPR003462">
    <property type="entry name" value="ODC_Mu_crystall"/>
</dbReference>
<dbReference type="InterPro" id="IPR023401">
    <property type="entry name" value="ODC_N"/>
</dbReference>
<dbReference type="NCBIfam" id="NF006379">
    <property type="entry name" value="PRK08618.1"/>
    <property type="match status" value="1"/>
</dbReference>
<dbReference type="PANTHER" id="PTHR13812">
    <property type="entry name" value="KETIMINE REDUCTASE MU-CRYSTALLIN"/>
    <property type="match status" value="1"/>
</dbReference>
<dbReference type="PANTHER" id="PTHR13812:SF19">
    <property type="entry name" value="KETIMINE REDUCTASE MU-CRYSTALLIN"/>
    <property type="match status" value="1"/>
</dbReference>
<dbReference type="Pfam" id="PF02423">
    <property type="entry name" value="OCD_Mu_crystall"/>
    <property type="match status" value="1"/>
</dbReference>
<dbReference type="PIRSF" id="PIRSF001439">
    <property type="entry name" value="CryM"/>
    <property type="match status" value="1"/>
</dbReference>
<dbReference type="SUPFAM" id="SSF51735">
    <property type="entry name" value="NAD(P)-binding Rossmann-fold domains"/>
    <property type="match status" value="1"/>
</dbReference>
<organism>
    <name type="scientific">Bacillus cereus (strain ZK / E33L)</name>
    <dbReference type="NCBI Taxonomy" id="288681"/>
    <lineage>
        <taxon>Bacteria</taxon>
        <taxon>Bacillati</taxon>
        <taxon>Bacillota</taxon>
        <taxon>Bacilli</taxon>
        <taxon>Bacillales</taxon>
        <taxon>Bacillaceae</taxon>
        <taxon>Bacillus</taxon>
        <taxon>Bacillus cereus group</taxon>
    </lineage>
</organism>
<name>PY2CR_BACCZ</name>
<reference key="1">
    <citation type="journal article" date="2006" name="J. Bacteriol.">
        <title>Pathogenomic sequence analysis of Bacillus cereus and Bacillus thuringiensis isolates closely related to Bacillus anthracis.</title>
        <authorList>
            <person name="Han C.S."/>
            <person name="Xie G."/>
            <person name="Challacombe J.F."/>
            <person name="Altherr M.R."/>
            <person name="Bhotika S.S."/>
            <person name="Bruce D."/>
            <person name="Campbell C.S."/>
            <person name="Campbell M.L."/>
            <person name="Chen J."/>
            <person name="Chertkov O."/>
            <person name="Cleland C."/>
            <person name="Dimitrijevic M."/>
            <person name="Doggett N.A."/>
            <person name="Fawcett J.J."/>
            <person name="Glavina T."/>
            <person name="Goodwin L.A."/>
            <person name="Hill K.K."/>
            <person name="Hitchcock P."/>
            <person name="Jackson P.J."/>
            <person name="Keim P."/>
            <person name="Kewalramani A.R."/>
            <person name="Longmire J."/>
            <person name="Lucas S."/>
            <person name="Malfatti S."/>
            <person name="McMurry K."/>
            <person name="Meincke L.J."/>
            <person name="Misra M."/>
            <person name="Moseman B.L."/>
            <person name="Mundt M."/>
            <person name="Munk A.C."/>
            <person name="Okinaka R.T."/>
            <person name="Parson-Quintana B."/>
            <person name="Reilly L.P."/>
            <person name="Richardson P."/>
            <person name="Robinson D.L."/>
            <person name="Rubin E."/>
            <person name="Saunders E."/>
            <person name="Tapia R."/>
            <person name="Tesmer J.G."/>
            <person name="Thayer N."/>
            <person name="Thompson L.S."/>
            <person name="Tice H."/>
            <person name="Ticknor L.O."/>
            <person name="Wills P.L."/>
            <person name="Brettin T.S."/>
            <person name="Gilna P."/>
        </authorList>
    </citation>
    <scope>NUCLEOTIDE SEQUENCE [LARGE SCALE GENOMIC DNA]</scope>
    <source>
        <strain>ZK / E33L</strain>
    </source>
</reference>
<reference key="2">
    <citation type="journal article" date="2014" name="Elife">
        <title>Prediction and characterization of enzymatic activities guided by sequence similarity and genome neighborhood networks.</title>
        <authorList>
            <person name="Zhao S."/>
            <person name="Sakai A."/>
            <person name="Zhang X."/>
            <person name="Vetting M.W."/>
            <person name="Kumar R."/>
            <person name="Hillerich B."/>
            <person name="San Francisco B."/>
            <person name="Solbiati J."/>
            <person name="Steves A."/>
            <person name="Brown S."/>
            <person name="Akiva E."/>
            <person name="Barber A."/>
            <person name="Seidel R.D."/>
            <person name="Babbitt P.C."/>
            <person name="Almo S.C."/>
            <person name="Gerlt J.A."/>
            <person name="Jacobson M.P."/>
        </authorList>
    </citation>
    <scope>FUNCTION</scope>
    <scope>CATALYTIC ACTIVITY</scope>
    <scope>BIOPHYSICOCHEMICAL PROPERTIES</scope>
</reference>
<accession>Q63FA5</accession>
<proteinExistence type="evidence at protein level"/>
<comment type="function">
    <text evidence="1">Catalyzes the reduction of Delta(1)-pyrroline-2-carboxylate (Pyr2C) to L-proline, using preferentially NADPH over NADH as the electron donor. May be involved in a degradation pathway that converts trans-3-hydroxy-L-proline (t3LHyp) to L-proline.</text>
</comment>
<comment type="catalytic activity">
    <reaction evidence="1">
        <text>L-proline + NAD(+) = 1-pyrroline-2-carboxylate + NADH + H(+)</text>
        <dbReference type="Rhea" id="RHEA:20321"/>
        <dbReference type="ChEBI" id="CHEBI:15378"/>
        <dbReference type="ChEBI" id="CHEBI:39785"/>
        <dbReference type="ChEBI" id="CHEBI:57540"/>
        <dbReference type="ChEBI" id="CHEBI:57945"/>
        <dbReference type="ChEBI" id="CHEBI:60039"/>
        <dbReference type="EC" id="1.5.1.49"/>
    </reaction>
</comment>
<comment type="catalytic activity">
    <reaction evidence="1">
        <text>L-proline + NADP(+) = 1-pyrroline-2-carboxylate + NADPH + H(+)</text>
        <dbReference type="Rhea" id="RHEA:20317"/>
        <dbReference type="ChEBI" id="CHEBI:15378"/>
        <dbReference type="ChEBI" id="CHEBI:39785"/>
        <dbReference type="ChEBI" id="CHEBI:57783"/>
        <dbReference type="ChEBI" id="CHEBI:58349"/>
        <dbReference type="ChEBI" id="CHEBI:60039"/>
        <dbReference type="EC" id="1.5.1.49"/>
    </reaction>
</comment>
<comment type="biophysicochemical properties">
    <kinetics>
        <KM evidence="1">0.03 mM for Delta(1)-pyrroline-2-carboxylate (using NADPH as cosubstrate) (in fact KM is inferior to 0.03 mM)</KM>
        <KM evidence="1">4.9 mM for Delta(1)-pyrroline-2-carboxylate (using NADH as cosubstrate)</KM>
        <text evidence="1">kcat is 5.8 sec(-1) for Pyr2C reduction using NADPH. kcat is 0.87 sec(-1) for Pyr2C reduction using NADH.</text>
    </kinetics>
</comment>
<comment type="similarity">
    <text evidence="3">Belongs to the ornithine cyclodeaminase/mu-crystallin family.</text>
</comment>
<sequence length="325" mass="35267">MLVISANEQRKLVNMNEVIAYAALALQEFSAERTITPIRTSLPFANEQNTALIMPSVAEGLEALGLKVVTVVPENKKIGKKTINGIVMLSDFQTGEPLALLEGSYLTMIRTGALSGVATKHLARHNAKTLCIIGTGEQAKGIAEAVFAVRDIEKVMLYNRTEEKAYAFAQYIQEKFGKPAYVYANANEAISEADIIVTTTNASTPVFSEKLQKGVHINAVGSFRPNMQELPSHAIANANKVVVESKEAALEETGDLQVPVREGLFEASDIHAELGQIISGEKAGRESDEEITVFKSVGLAVVDIIVAKYLYEKAVERGVGERIEF</sequence>